<evidence type="ECO:0000269" key="1">
    <source>
    </source>
</evidence>
<evidence type="ECO:0000305" key="2"/>
<evidence type="ECO:0007829" key="3">
    <source>
        <dbReference type="PDB" id="7YKC"/>
    </source>
</evidence>
<dbReference type="EC" id="2.5.1.54"/>
<dbReference type="EMBL" id="X13514">
    <property type="protein sequence ID" value="CAA31865.1"/>
    <property type="molecule type" value="Genomic_DNA"/>
</dbReference>
<dbReference type="EMBL" id="Z68196">
    <property type="protein sequence ID" value="CAA92374.1"/>
    <property type="molecule type" value="Genomic_DNA"/>
</dbReference>
<dbReference type="EMBL" id="Z74331">
    <property type="protein sequence ID" value="CAA98859.1"/>
    <property type="molecule type" value="Genomic_DNA"/>
</dbReference>
<dbReference type="EMBL" id="AY557657">
    <property type="protein sequence ID" value="AAS55983.1"/>
    <property type="molecule type" value="Genomic_DNA"/>
</dbReference>
<dbReference type="EMBL" id="BK006938">
    <property type="protein sequence ID" value="DAA11883.1"/>
    <property type="molecule type" value="Genomic_DNA"/>
</dbReference>
<dbReference type="PIR" id="S22840">
    <property type="entry name" value="S22840"/>
</dbReference>
<dbReference type="RefSeq" id="NP_010320.3">
    <property type="nucleotide sequence ID" value="NM_001180343.3"/>
</dbReference>
<dbReference type="PDB" id="7YKC">
    <property type="method" value="X-ray"/>
    <property type="resolution" value="3.30 A"/>
    <property type="chains" value="A/B=1-370"/>
</dbReference>
<dbReference type="PDBsum" id="7YKC"/>
<dbReference type="SMR" id="P14843"/>
<dbReference type="BioGRID" id="32090">
    <property type="interactions" value="76"/>
</dbReference>
<dbReference type="FunCoup" id="P14843">
    <property type="interactions" value="233"/>
</dbReference>
<dbReference type="IntAct" id="P14843">
    <property type="interactions" value="33"/>
</dbReference>
<dbReference type="STRING" id="4932.YDR035W"/>
<dbReference type="iPTMnet" id="P14843"/>
<dbReference type="PaxDb" id="4932-YDR035W"/>
<dbReference type="PeptideAtlas" id="P14843"/>
<dbReference type="TopDownProteomics" id="P14843"/>
<dbReference type="EnsemblFungi" id="YDR035W_mRNA">
    <property type="protein sequence ID" value="YDR035W"/>
    <property type="gene ID" value="YDR035W"/>
</dbReference>
<dbReference type="GeneID" id="851605"/>
<dbReference type="KEGG" id="sce:YDR035W"/>
<dbReference type="AGR" id="SGD:S000002442"/>
<dbReference type="SGD" id="S000002442">
    <property type="gene designation" value="ARO3"/>
</dbReference>
<dbReference type="VEuPathDB" id="FungiDB:YDR035W"/>
<dbReference type="eggNOG" id="ENOG502QPSU">
    <property type="taxonomic scope" value="Eukaryota"/>
</dbReference>
<dbReference type="GeneTree" id="ENSGT00940000176767"/>
<dbReference type="HOGENOM" id="CLU_030903_0_1_1"/>
<dbReference type="InParanoid" id="P14843"/>
<dbReference type="OMA" id="DINTGLR"/>
<dbReference type="OrthoDB" id="4699125at2759"/>
<dbReference type="BioCyc" id="YEAST:YDR035W-MONOMER"/>
<dbReference type="UniPathway" id="UPA00053">
    <property type="reaction ID" value="UER00084"/>
</dbReference>
<dbReference type="BioGRID-ORCS" id="851605">
    <property type="hits" value="1 hit in 10 CRISPR screens"/>
</dbReference>
<dbReference type="PRO" id="PR:P14843"/>
<dbReference type="Proteomes" id="UP000002311">
    <property type="component" value="Chromosome IV"/>
</dbReference>
<dbReference type="RNAct" id="P14843">
    <property type="molecule type" value="protein"/>
</dbReference>
<dbReference type="GO" id="GO:0005737">
    <property type="term" value="C:cytoplasm"/>
    <property type="evidence" value="ECO:0007005"/>
    <property type="project" value="SGD"/>
</dbReference>
<dbReference type="GO" id="GO:0005739">
    <property type="term" value="C:mitochondrion"/>
    <property type="evidence" value="ECO:0007005"/>
    <property type="project" value="SGD"/>
</dbReference>
<dbReference type="GO" id="GO:0005634">
    <property type="term" value="C:nucleus"/>
    <property type="evidence" value="ECO:0007005"/>
    <property type="project" value="SGD"/>
</dbReference>
<dbReference type="GO" id="GO:0003849">
    <property type="term" value="F:3-deoxy-7-phosphoheptulonate synthase activity"/>
    <property type="evidence" value="ECO:0000314"/>
    <property type="project" value="SGD"/>
</dbReference>
<dbReference type="GO" id="GO:0008652">
    <property type="term" value="P:amino acid biosynthetic process"/>
    <property type="evidence" value="ECO:0007669"/>
    <property type="project" value="UniProtKB-KW"/>
</dbReference>
<dbReference type="GO" id="GO:0009073">
    <property type="term" value="P:aromatic amino acid family biosynthetic process"/>
    <property type="evidence" value="ECO:0000318"/>
    <property type="project" value="GO_Central"/>
</dbReference>
<dbReference type="GO" id="GO:0009423">
    <property type="term" value="P:chorismate biosynthetic process"/>
    <property type="evidence" value="ECO:0000304"/>
    <property type="project" value="SGD"/>
</dbReference>
<dbReference type="FunFam" id="3.20.20.70:FF:000005">
    <property type="entry name" value="Phospho-2-dehydro-3-deoxyheptonate aldolase"/>
    <property type="match status" value="1"/>
</dbReference>
<dbReference type="Gene3D" id="3.20.20.70">
    <property type="entry name" value="Aldolase class I"/>
    <property type="match status" value="1"/>
</dbReference>
<dbReference type="InterPro" id="IPR013785">
    <property type="entry name" value="Aldolase_TIM"/>
</dbReference>
<dbReference type="InterPro" id="IPR006218">
    <property type="entry name" value="DAHP1/KDSA"/>
</dbReference>
<dbReference type="InterPro" id="IPR006219">
    <property type="entry name" value="DAHP_synth_1"/>
</dbReference>
<dbReference type="NCBIfam" id="TIGR00034">
    <property type="entry name" value="aroFGH"/>
    <property type="match status" value="1"/>
</dbReference>
<dbReference type="NCBIfam" id="NF009395">
    <property type="entry name" value="PRK12755.1"/>
    <property type="match status" value="1"/>
</dbReference>
<dbReference type="PANTHER" id="PTHR21225">
    <property type="entry name" value="PHOSPHO-2-DEHYDRO-3-DEOXYHEPTONATE ALDOLASE DAHP SYNTHETASE"/>
    <property type="match status" value="1"/>
</dbReference>
<dbReference type="PANTHER" id="PTHR21225:SF18">
    <property type="entry name" value="PHOSPHO-2-DEHYDRO-3-DEOXYHEPTONATE ALDOLASE, PHENYLALANINE-INHIBITED"/>
    <property type="match status" value="1"/>
</dbReference>
<dbReference type="Pfam" id="PF00793">
    <property type="entry name" value="DAHP_synth_1"/>
    <property type="match status" value="1"/>
</dbReference>
<dbReference type="PIRSF" id="PIRSF001361">
    <property type="entry name" value="DAHP_synthase"/>
    <property type="match status" value="1"/>
</dbReference>
<dbReference type="SUPFAM" id="SSF51569">
    <property type="entry name" value="Aldolase"/>
    <property type="match status" value="1"/>
</dbReference>
<feature type="chain" id="PRO_0000140849" description="Phospho-2-dehydro-3-deoxyheptonate aldolase, phenylalanine-inhibited">
    <location>
        <begin position="1"/>
        <end position="370"/>
    </location>
</feature>
<feature type="turn" evidence="3">
    <location>
        <begin position="6"/>
        <end position="9"/>
    </location>
</feature>
<feature type="strand" evidence="3">
    <location>
        <begin position="13"/>
        <end position="15"/>
    </location>
</feature>
<feature type="strand" evidence="3">
    <location>
        <begin position="19"/>
        <end position="23"/>
    </location>
</feature>
<feature type="helix" evidence="3">
    <location>
        <begin position="28"/>
        <end position="34"/>
    </location>
</feature>
<feature type="helix" evidence="3">
    <location>
        <begin position="39"/>
        <end position="55"/>
    </location>
</feature>
<feature type="turn" evidence="3">
    <location>
        <begin position="56"/>
        <end position="58"/>
    </location>
</feature>
<feature type="strand" evidence="3">
    <location>
        <begin position="62"/>
        <end position="68"/>
    </location>
</feature>
<feature type="helix" evidence="3">
    <location>
        <begin position="75"/>
        <end position="89"/>
    </location>
</feature>
<feature type="turn" evidence="3">
    <location>
        <begin position="93"/>
        <end position="95"/>
    </location>
</feature>
<feature type="strand" evidence="3">
    <location>
        <begin position="96"/>
        <end position="101"/>
    </location>
</feature>
<feature type="strand" evidence="3">
    <location>
        <begin position="109"/>
        <end position="112"/>
    </location>
</feature>
<feature type="helix" evidence="3">
    <location>
        <begin position="115"/>
        <end position="118"/>
    </location>
</feature>
<feature type="strand" evidence="3">
    <location>
        <begin position="122"/>
        <end position="124"/>
    </location>
</feature>
<feature type="helix" evidence="3">
    <location>
        <begin position="128"/>
        <end position="142"/>
    </location>
</feature>
<feature type="turn" evidence="3">
    <location>
        <begin position="143"/>
        <end position="145"/>
    </location>
</feature>
<feature type="strand" evidence="3">
    <location>
        <begin position="148"/>
        <end position="151"/>
    </location>
</feature>
<feature type="helix" evidence="3">
    <location>
        <begin position="158"/>
        <end position="161"/>
    </location>
</feature>
<feature type="helix" evidence="3">
    <location>
        <begin position="162"/>
        <end position="164"/>
    </location>
</feature>
<feature type="strand" evidence="3">
    <location>
        <begin position="165"/>
        <end position="170"/>
    </location>
</feature>
<feature type="helix" evidence="3">
    <location>
        <begin position="172"/>
        <end position="174"/>
    </location>
</feature>
<feature type="helix" evidence="3">
    <location>
        <begin position="178"/>
        <end position="186"/>
    </location>
</feature>
<feature type="strand" evidence="3">
    <location>
        <begin position="191"/>
        <end position="194"/>
    </location>
</feature>
<feature type="helix" evidence="3">
    <location>
        <begin position="202"/>
        <end position="212"/>
    </location>
</feature>
<feature type="strand" evidence="3">
    <location>
        <begin position="216"/>
        <end position="220"/>
    </location>
</feature>
<feature type="strand" evidence="3">
    <location>
        <begin position="224"/>
        <end position="231"/>
    </location>
</feature>
<feature type="strand" evidence="3">
    <location>
        <begin position="237"/>
        <end position="241"/>
    </location>
</feature>
<feature type="helix" evidence="3">
    <location>
        <begin position="252"/>
        <end position="264"/>
    </location>
</feature>
<feature type="strand" evidence="3">
    <location>
        <begin position="275"/>
        <end position="278"/>
    </location>
</feature>
<feature type="turn" evidence="3">
    <location>
        <begin position="281"/>
        <end position="286"/>
    </location>
</feature>
<feature type="helix" evidence="3">
    <location>
        <begin position="290"/>
        <end position="303"/>
    </location>
</feature>
<feature type="strand" evidence="3">
    <location>
        <begin position="308"/>
        <end position="316"/>
    </location>
</feature>
<feature type="strand" evidence="3">
    <location>
        <begin position="318"/>
        <end position="321"/>
    </location>
</feature>
<feature type="strand" evidence="3">
    <location>
        <begin position="340"/>
        <end position="342"/>
    </location>
</feature>
<feature type="helix" evidence="3">
    <location>
        <begin position="347"/>
        <end position="368"/>
    </location>
</feature>
<proteinExistence type="evidence at protein level"/>
<gene>
    <name type="primary">ARO3</name>
    <name type="ordered locus">YDR035W</name>
    <name type="ORF">YD9673.07</name>
</gene>
<keyword id="KW-0002">3D-structure</keyword>
<keyword id="KW-0028">Amino-acid biosynthesis</keyword>
<keyword id="KW-0057">Aromatic amino acid biosynthesis</keyword>
<keyword id="KW-1185">Reference proteome</keyword>
<keyword id="KW-0346">Stress response</keyword>
<keyword id="KW-0808">Transferase</keyword>
<sequence length="370" mass="41070">MFIKNDHAGDRKRLEDWRIKGYDPLTPPDLLQHEFPISAKGEENIIKARDSVCDILNGKDDRLVIVIGPCSLHDPKAAYDYADRLAKISEKLSKDLLIIMRAYLEKPRTTVGWKGLINDPDMNNSFQINKGLRISREMFIKLVEKLPIAGEMLDTISPQFLSDCFSLGAIGARTTESQLHRELASGLSFPIGFKNGTDGGLQVAIDAMRAAAHEHYFLSVTKPGVTAIVGTEGNKDTFLILRGGKNGTNFDKESVQNTKKQLEKAGLTDDSQKRIMIDCSHGNSNKDFKNQPKVAKCIYDQLTEGENSLCGVMIESNINEGRQDIPKEGGREGLKYGCSVTDACIGWESTEQVLELLAEGVRNRRKALKK</sequence>
<accession>P14843</accession>
<accession>D6VS23</accession>
<reference key="1">
    <citation type="journal article" date="1988" name="Mol. Gen. Genet.">
        <title>Structure of the ARO3 gene of Saccharomyces cerevisiae.</title>
        <authorList>
            <person name="Paravicini G."/>
            <person name="Braus G."/>
            <person name="Huetter R."/>
        </authorList>
    </citation>
    <scope>NUCLEOTIDE SEQUENCE [GENOMIC DNA]</scope>
</reference>
<reference key="2">
    <citation type="journal article" date="1997" name="Nature">
        <title>The nucleotide sequence of Saccharomyces cerevisiae chromosome IV.</title>
        <authorList>
            <person name="Jacq C."/>
            <person name="Alt-Moerbe J."/>
            <person name="Andre B."/>
            <person name="Arnold W."/>
            <person name="Bahr A."/>
            <person name="Ballesta J.P.G."/>
            <person name="Bargues M."/>
            <person name="Baron L."/>
            <person name="Becker A."/>
            <person name="Biteau N."/>
            <person name="Bloecker H."/>
            <person name="Blugeon C."/>
            <person name="Boskovic J."/>
            <person name="Brandt P."/>
            <person name="Brueckner M."/>
            <person name="Buitrago M.J."/>
            <person name="Coster F."/>
            <person name="Delaveau T."/>
            <person name="del Rey F."/>
            <person name="Dujon B."/>
            <person name="Eide L.G."/>
            <person name="Garcia-Cantalejo J.M."/>
            <person name="Goffeau A."/>
            <person name="Gomez-Peris A."/>
            <person name="Granotier C."/>
            <person name="Hanemann V."/>
            <person name="Hankeln T."/>
            <person name="Hoheisel J.D."/>
            <person name="Jaeger W."/>
            <person name="Jimenez A."/>
            <person name="Jonniaux J.-L."/>
            <person name="Kraemer C."/>
            <person name="Kuester H."/>
            <person name="Laamanen P."/>
            <person name="Legros Y."/>
            <person name="Louis E.J."/>
            <person name="Moeller-Rieker S."/>
            <person name="Monnet A."/>
            <person name="Moro M."/>
            <person name="Mueller-Auer S."/>
            <person name="Nussbaumer B."/>
            <person name="Paricio N."/>
            <person name="Paulin L."/>
            <person name="Perea J."/>
            <person name="Perez-Alonso M."/>
            <person name="Perez-Ortin J.E."/>
            <person name="Pohl T.M."/>
            <person name="Prydz H."/>
            <person name="Purnelle B."/>
            <person name="Rasmussen S.W."/>
            <person name="Remacha M.A."/>
            <person name="Revuelta J.L."/>
            <person name="Rieger M."/>
            <person name="Salom D."/>
            <person name="Saluz H.P."/>
            <person name="Saiz J.E."/>
            <person name="Saren A.-M."/>
            <person name="Schaefer M."/>
            <person name="Scharfe M."/>
            <person name="Schmidt E.R."/>
            <person name="Schneider C."/>
            <person name="Scholler P."/>
            <person name="Schwarz S."/>
            <person name="Soler-Mira A."/>
            <person name="Urrestarazu L.A."/>
            <person name="Verhasselt P."/>
            <person name="Vissers S."/>
            <person name="Voet M."/>
            <person name="Volckaert G."/>
            <person name="Wagner G."/>
            <person name="Wambutt R."/>
            <person name="Wedler E."/>
            <person name="Wedler H."/>
            <person name="Woelfl S."/>
            <person name="Harris D.E."/>
            <person name="Bowman S."/>
            <person name="Brown D."/>
            <person name="Churcher C.M."/>
            <person name="Connor R."/>
            <person name="Dedman K."/>
            <person name="Gentles S."/>
            <person name="Hamlin N."/>
            <person name="Hunt S."/>
            <person name="Jones L."/>
            <person name="McDonald S."/>
            <person name="Murphy L.D."/>
            <person name="Niblett D."/>
            <person name="Odell C."/>
            <person name="Oliver K."/>
            <person name="Rajandream M.A."/>
            <person name="Richards C."/>
            <person name="Shore L."/>
            <person name="Walsh S.V."/>
            <person name="Barrell B.G."/>
            <person name="Dietrich F.S."/>
            <person name="Mulligan J.T."/>
            <person name="Allen E."/>
            <person name="Araujo R."/>
            <person name="Aviles E."/>
            <person name="Berno A."/>
            <person name="Carpenter J."/>
            <person name="Chen E."/>
            <person name="Cherry J.M."/>
            <person name="Chung E."/>
            <person name="Duncan M."/>
            <person name="Hunicke-Smith S."/>
            <person name="Hyman R.W."/>
            <person name="Komp C."/>
            <person name="Lashkari D."/>
            <person name="Lew H."/>
            <person name="Lin D."/>
            <person name="Mosedale D."/>
            <person name="Nakahara K."/>
            <person name="Namath A."/>
            <person name="Oefner P."/>
            <person name="Oh C."/>
            <person name="Petel F.X."/>
            <person name="Roberts D."/>
            <person name="Schramm S."/>
            <person name="Schroeder M."/>
            <person name="Shogren T."/>
            <person name="Shroff N."/>
            <person name="Winant A."/>
            <person name="Yelton M.A."/>
            <person name="Botstein D."/>
            <person name="Davis R.W."/>
            <person name="Johnston M."/>
            <person name="Andrews S."/>
            <person name="Brinkman R."/>
            <person name="Cooper J."/>
            <person name="Ding H."/>
            <person name="Du Z."/>
            <person name="Favello A."/>
            <person name="Fulton L."/>
            <person name="Gattung S."/>
            <person name="Greco T."/>
            <person name="Hallsworth K."/>
            <person name="Hawkins J."/>
            <person name="Hillier L.W."/>
            <person name="Jier M."/>
            <person name="Johnson D."/>
            <person name="Johnston L."/>
            <person name="Kirsten J."/>
            <person name="Kucaba T."/>
            <person name="Langston Y."/>
            <person name="Latreille P."/>
            <person name="Le T."/>
            <person name="Mardis E."/>
            <person name="Menezes S."/>
            <person name="Miller N."/>
            <person name="Nhan M."/>
            <person name="Pauley A."/>
            <person name="Peluso D."/>
            <person name="Rifkin L."/>
            <person name="Riles L."/>
            <person name="Taich A."/>
            <person name="Trevaskis E."/>
            <person name="Vignati D."/>
            <person name="Wilcox L."/>
            <person name="Wohldman P."/>
            <person name="Vaudin M."/>
            <person name="Wilson R."/>
            <person name="Waterston R."/>
            <person name="Albermann K."/>
            <person name="Hani J."/>
            <person name="Heumann K."/>
            <person name="Kleine K."/>
            <person name="Mewes H.-W."/>
            <person name="Zollner A."/>
            <person name="Zaccaria P."/>
        </authorList>
    </citation>
    <scope>NUCLEOTIDE SEQUENCE [LARGE SCALE GENOMIC DNA]</scope>
    <source>
        <strain>ATCC 204508 / S288c</strain>
    </source>
</reference>
<reference key="3">
    <citation type="journal article" date="2014" name="G3 (Bethesda)">
        <title>The reference genome sequence of Saccharomyces cerevisiae: Then and now.</title>
        <authorList>
            <person name="Engel S.R."/>
            <person name="Dietrich F.S."/>
            <person name="Fisk D.G."/>
            <person name="Binkley G."/>
            <person name="Balakrishnan R."/>
            <person name="Costanzo M.C."/>
            <person name="Dwight S.S."/>
            <person name="Hitz B.C."/>
            <person name="Karra K."/>
            <person name="Nash R.S."/>
            <person name="Weng S."/>
            <person name="Wong E.D."/>
            <person name="Lloyd P."/>
            <person name="Skrzypek M.S."/>
            <person name="Miyasato S.R."/>
            <person name="Simison M."/>
            <person name="Cherry J.M."/>
        </authorList>
    </citation>
    <scope>GENOME REANNOTATION</scope>
    <source>
        <strain>ATCC 204508 / S288c</strain>
    </source>
</reference>
<reference key="4">
    <citation type="journal article" date="2007" name="Genome Res.">
        <title>Approaching a complete repository of sequence-verified protein-encoding clones for Saccharomyces cerevisiae.</title>
        <authorList>
            <person name="Hu Y."/>
            <person name="Rolfs A."/>
            <person name="Bhullar B."/>
            <person name="Murthy T.V.S."/>
            <person name="Zhu C."/>
            <person name="Berger M.F."/>
            <person name="Camargo A.A."/>
            <person name="Kelley F."/>
            <person name="McCarron S."/>
            <person name="Jepson D."/>
            <person name="Richardson A."/>
            <person name="Raphael J."/>
            <person name="Moreira D."/>
            <person name="Taycher E."/>
            <person name="Zuo D."/>
            <person name="Mohr S."/>
            <person name="Kane M.F."/>
            <person name="Williamson J."/>
            <person name="Simpson A.J.G."/>
            <person name="Bulyk M.L."/>
            <person name="Harlow E."/>
            <person name="Marsischky G."/>
            <person name="Kolodner R.D."/>
            <person name="LaBaer J."/>
        </authorList>
    </citation>
    <scope>NUCLEOTIDE SEQUENCE [GENOMIC DNA]</scope>
    <source>
        <strain>ATCC 204508 / S288c</strain>
    </source>
</reference>
<reference key="5">
    <citation type="journal article" date="2003" name="Nature">
        <title>Global analysis of protein expression in yeast.</title>
        <authorList>
            <person name="Ghaemmaghami S."/>
            <person name="Huh W.-K."/>
            <person name="Bower K."/>
            <person name="Howson R.W."/>
            <person name="Belle A."/>
            <person name="Dephoure N."/>
            <person name="O'Shea E.K."/>
            <person name="Weissman J.S."/>
        </authorList>
    </citation>
    <scope>LEVEL OF PROTEIN EXPRESSION [LARGE SCALE ANALYSIS]</scope>
</reference>
<reference key="6">
    <citation type="journal article" date="2012" name="Proc. Natl. Acad. Sci. U.S.A.">
        <title>N-terminal acetylome analyses and functional insights of the N-terminal acetyltransferase NatB.</title>
        <authorList>
            <person name="Van Damme P."/>
            <person name="Lasa M."/>
            <person name="Polevoda B."/>
            <person name="Gazquez C."/>
            <person name="Elosegui-Artola A."/>
            <person name="Kim D.S."/>
            <person name="De Juan-Pardo E."/>
            <person name="Demeyer K."/>
            <person name="Hole K."/>
            <person name="Larrea E."/>
            <person name="Timmerman E."/>
            <person name="Prieto J."/>
            <person name="Arnesen T."/>
            <person name="Sherman F."/>
            <person name="Gevaert K."/>
            <person name="Aldabe R."/>
        </authorList>
    </citation>
    <scope>IDENTIFICATION BY MASS SPECTROMETRY [LARGE SCALE ANALYSIS]</scope>
</reference>
<comment type="function">
    <text>Stereospecific condensation of phosphoenolpyruvate (PEP) and D-erythrose-4-phosphate (E4P) giving rise to 3-deoxy-D-arabino-heptulosonate-7-phosphate (DAHP).</text>
</comment>
<comment type="catalytic activity">
    <reaction>
        <text>D-erythrose 4-phosphate + phosphoenolpyruvate + H2O = 7-phospho-2-dehydro-3-deoxy-D-arabino-heptonate + phosphate</text>
        <dbReference type="Rhea" id="RHEA:14717"/>
        <dbReference type="ChEBI" id="CHEBI:15377"/>
        <dbReference type="ChEBI" id="CHEBI:16897"/>
        <dbReference type="ChEBI" id="CHEBI:43474"/>
        <dbReference type="ChEBI" id="CHEBI:58394"/>
        <dbReference type="ChEBI" id="CHEBI:58702"/>
        <dbReference type="EC" id="2.5.1.54"/>
    </reaction>
</comment>
<comment type="activity regulation">
    <text>Inhibited by phenyalanine.</text>
</comment>
<comment type="pathway">
    <text>Metabolic intermediate biosynthesis; chorismate biosynthesis; chorismate from D-erythrose 4-phosphate and phosphoenolpyruvate: step 1/7.</text>
</comment>
<comment type="induction">
    <text>By amino acid starvation.</text>
</comment>
<comment type="miscellaneous">
    <text evidence="1">Present with 8970 molecules/cell in log phase SD medium.</text>
</comment>
<comment type="similarity">
    <text evidence="2">Belongs to the class-I DAHP synthase family.</text>
</comment>
<protein>
    <recommendedName>
        <fullName>Phospho-2-dehydro-3-deoxyheptonate aldolase, phenylalanine-inhibited</fullName>
        <ecNumber>2.5.1.54</ecNumber>
    </recommendedName>
    <alternativeName>
        <fullName>3-deoxy-D-arabino-heptulosonate 7-phosphate synthase</fullName>
    </alternativeName>
    <alternativeName>
        <fullName>DAHP synthase</fullName>
    </alternativeName>
    <alternativeName>
        <fullName>Phospho-2-keto-3-deoxyheptonate aldolase</fullName>
    </alternativeName>
</protein>
<organism>
    <name type="scientific">Saccharomyces cerevisiae (strain ATCC 204508 / S288c)</name>
    <name type="common">Baker's yeast</name>
    <dbReference type="NCBI Taxonomy" id="559292"/>
    <lineage>
        <taxon>Eukaryota</taxon>
        <taxon>Fungi</taxon>
        <taxon>Dikarya</taxon>
        <taxon>Ascomycota</taxon>
        <taxon>Saccharomycotina</taxon>
        <taxon>Saccharomycetes</taxon>
        <taxon>Saccharomycetales</taxon>
        <taxon>Saccharomycetaceae</taxon>
        <taxon>Saccharomyces</taxon>
    </lineage>
</organism>
<name>AROF_YEAST</name>